<protein>
    <recommendedName>
        <fullName>Protein S100-G</fullName>
    </recommendedName>
    <alternativeName>
        <fullName>Calbindin-D9k</fullName>
    </alternativeName>
    <alternativeName>
        <fullName>S100 calcium-binding protein G</fullName>
    </alternativeName>
    <alternativeName>
        <fullName>Vitamin D-dependent calcium-binding protein, intestinal</fullName>
        <shortName>CABP</shortName>
    </alternativeName>
</protein>
<name>S100G_HORSE</name>
<keyword id="KW-0007">Acetylation</keyword>
<keyword id="KW-0106">Calcium</keyword>
<keyword id="KW-0479">Metal-binding</keyword>
<keyword id="KW-0597">Phosphoprotein</keyword>
<keyword id="KW-1185">Reference proteome</keyword>
<keyword id="KW-0677">Repeat</keyword>
<keyword id="KW-0848">Vitamin D</keyword>
<gene>
    <name type="primary">S100G</name>
</gene>
<organism>
    <name type="scientific">Equus caballus</name>
    <name type="common">Horse</name>
    <dbReference type="NCBI Taxonomy" id="9796"/>
    <lineage>
        <taxon>Eukaryota</taxon>
        <taxon>Metazoa</taxon>
        <taxon>Chordata</taxon>
        <taxon>Craniata</taxon>
        <taxon>Vertebrata</taxon>
        <taxon>Euteleostomi</taxon>
        <taxon>Mammalia</taxon>
        <taxon>Eutheria</taxon>
        <taxon>Laurasiatheria</taxon>
        <taxon>Perissodactyla</taxon>
        <taxon>Equidae</taxon>
        <taxon>Equus</taxon>
    </lineage>
</organism>
<sequence length="79" mass="8942">MSVKKSPEELKKIFEKYAAKEGDPDQLSKEELKLLIQNELPALLKGSSSIDDLFKELDKNGDGEVSFEEFQVLVKKISQ</sequence>
<proteinExistence type="inferred from homology"/>
<evidence type="ECO:0000250" key="1">
    <source>
        <dbReference type="UniProtKB" id="P02633"/>
    </source>
</evidence>
<evidence type="ECO:0000250" key="2">
    <source>
        <dbReference type="UniProtKB" id="P02634"/>
    </source>
</evidence>
<evidence type="ECO:0000255" key="3">
    <source>
        <dbReference type="PROSITE-ProRule" id="PRU00448"/>
    </source>
</evidence>
<evidence type="ECO:0000305" key="4"/>
<dbReference type="EMBL" id="AY229893">
    <property type="protein sequence ID" value="AAO73439.1"/>
    <property type="molecule type" value="mRNA"/>
</dbReference>
<dbReference type="RefSeq" id="NP_001075359.1">
    <property type="nucleotide sequence ID" value="NM_001081890.1"/>
</dbReference>
<dbReference type="RefSeq" id="XP_005613996.2">
    <property type="nucleotide sequence ID" value="XM_005613939.4"/>
</dbReference>
<dbReference type="RefSeq" id="XP_005613997.2">
    <property type="nucleotide sequence ID" value="XM_005613940.4"/>
</dbReference>
<dbReference type="SMR" id="Q865V3"/>
<dbReference type="FunCoup" id="Q865V3">
    <property type="interactions" value="4"/>
</dbReference>
<dbReference type="STRING" id="9796.ENSECAP00000015147"/>
<dbReference type="PaxDb" id="9796-ENSECAP00000015147"/>
<dbReference type="Ensembl" id="ENSECAT00000018564.3">
    <property type="protein sequence ID" value="ENSECAP00000015147.2"/>
    <property type="gene ID" value="ENSECAG00000017623.3"/>
</dbReference>
<dbReference type="GeneID" id="100033995"/>
<dbReference type="KEGG" id="ecb:100033995"/>
<dbReference type="CTD" id="795"/>
<dbReference type="VGNC" id="VGNC:55532">
    <property type="gene designation" value="S100G"/>
</dbReference>
<dbReference type="GeneTree" id="ENSGT00530000064238"/>
<dbReference type="InParanoid" id="Q865V3"/>
<dbReference type="OMA" id="QKYAAKE"/>
<dbReference type="OrthoDB" id="26525at2759"/>
<dbReference type="Proteomes" id="UP000002281">
    <property type="component" value="Chromosome X"/>
</dbReference>
<dbReference type="Bgee" id="ENSECAG00000017623">
    <property type="expression patterns" value="Expressed in adult mammalian kidney and 17 other cell types or tissues"/>
</dbReference>
<dbReference type="GO" id="GO:0016324">
    <property type="term" value="C:apical plasma membrane"/>
    <property type="evidence" value="ECO:0007669"/>
    <property type="project" value="Ensembl"/>
</dbReference>
<dbReference type="GO" id="GO:0016323">
    <property type="term" value="C:basolateral plasma membrane"/>
    <property type="evidence" value="ECO:0007669"/>
    <property type="project" value="Ensembl"/>
</dbReference>
<dbReference type="GO" id="GO:0005737">
    <property type="term" value="C:cytoplasm"/>
    <property type="evidence" value="ECO:0000318"/>
    <property type="project" value="GO_Central"/>
</dbReference>
<dbReference type="GO" id="GO:0005509">
    <property type="term" value="F:calcium ion binding"/>
    <property type="evidence" value="ECO:0000318"/>
    <property type="project" value="GO_Central"/>
</dbReference>
<dbReference type="GO" id="GO:0048306">
    <property type="term" value="F:calcium-dependent protein binding"/>
    <property type="evidence" value="ECO:0000318"/>
    <property type="project" value="GO_Central"/>
</dbReference>
<dbReference type="GO" id="GO:0046914">
    <property type="term" value="F:transition metal ion binding"/>
    <property type="evidence" value="ECO:0007669"/>
    <property type="project" value="InterPro"/>
</dbReference>
<dbReference type="GO" id="GO:0005499">
    <property type="term" value="F:vitamin D binding"/>
    <property type="evidence" value="ECO:0007669"/>
    <property type="project" value="UniProtKB-KW"/>
</dbReference>
<dbReference type="CDD" id="cd00213">
    <property type="entry name" value="S-100"/>
    <property type="match status" value="1"/>
</dbReference>
<dbReference type="FunFam" id="1.10.238.10:FF:000236">
    <property type="entry name" value="Protein S100"/>
    <property type="match status" value="1"/>
</dbReference>
<dbReference type="Gene3D" id="1.10.238.10">
    <property type="entry name" value="EF-hand"/>
    <property type="match status" value="1"/>
</dbReference>
<dbReference type="InterPro" id="IPR011992">
    <property type="entry name" value="EF-hand-dom_pair"/>
</dbReference>
<dbReference type="InterPro" id="IPR018247">
    <property type="entry name" value="EF_Hand_1_Ca_BS"/>
</dbReference>
<dbReference type="InterPro" id="IPR002048">
    <property type="entry name" value="EF_hand_dom"/>
</dbReference>
<dbReference type="InterPro" id="IPR034325">
    <property type="entry name" value="S-100_dom"/>
</dbReference>
<dbReference type="InterPro" id="IPR001751">
    <property type="entry name" value="S100/CaBP7/8-like_CS"/>
</dbReference>
<dbReference type="InterPro" id="IPR013787">
    <property type="entry name" value="S100_Ca-bd_sub"/>
</dbReference>
<dbReference type="PANTHER" id="PTHR11639:SF73">
    <property type="entry name" value="PROTEIN S100-G"/>
    <property type="match status" value="1"/>
</dbReference>
<dbReference type="PANTHER" id="PTHR11639">
    <property type="entry name" value="S100 CALCIUM-BINDING PROTEIN"/>
    <property type="match status" value="1"/>
</dbReference>
<dbReference type="Pfam" id="PF00036">
    <property type="entry name" value="EF-hand_1"/>
    <property type="match status" value="1"/>
</dbReference>
<dbReference type="Pfam" id="PF01023">
    <property type="entry name" value="S_100"/>
    <property type="match status" value="1"/>
</dbReference>
<dbReference type="SMART" id="SM00054">
    <property type="entry name" value="EFh"/>
    <property type="match status" value="1"/>
</dbReference>
<dbReference type="SMART" id="SM01394">
    <property type="entry name" value="S_100"/>
    <property type="match status" value="1"/>
</dbReference>
<dbReference type="SUPFAM" id="SSF47473">
    <property type="entry name" value="EF-hand"/>
    <property type="match status" value="1"/>
</dbReference>
<dbReference type="PROSITE" id="PS00018">
    <property type="entry name" value="EF_HAND_1"/>
    <property type="match status" value="1"/>
</dbReference>
<dbReference type="PROSITE" id="PS50222">
    <property type="entry name" value="EF_HAND_2"/>
    <property type="match status" value="1"/>
</dbReference>
<dbReference type="PROSITE" id="PS00303">
    <property type="entry name" value="S100_CABP"/>
    <property type="match status" value="1"/>
</dbReference>
<comment type="similarity">
    <text evidence="4">Belongs to the S-100 family.</text>
</comment>
<accession>Q865V3</accession>
<feature type="initiator methionine" description="Removed" evidence="1">
    <location>
        <position position="1"/>
    </location>
</feature>
<feature type="chain" id="PRO_0000273721" description="Protein S100-G">
    <location>
        <begin position="2"/>
        <end position="79"/>
    </location>
</feature>
<feature type="domain" description="EF-hand 1" evidence="4">
    <location>
        <begin position="13"/>
        <end position="48"/>
    </location>
</feature>
<feature type="domain" description="EF-hand 2" evidence="3">
    <location>
        <begin position="45"/>
        <end position="79"/>
    </location>
</feature>
<feature type="binding site" evidence="4">
    <location>
        <position position="26"/>
    </location>
    <ligand>
        <name>Ca(2+)</name>
        <dbReference type="ChEBI" id="CHEBI:29108"/>
        <label>1</label>
        <note>low affinity</note>
    </ligand>
</feature>
<feature type="binding site" evidence="4">
    <location>
        <position position="31"/>
    </location>
    <ligand>
        <name>Ca(2+)</name>
        <dbReference type="ChEBI" id="CHEBI:29108"/>
        <label>1</label>
        <note>low affinity</note>
    </ligand>
</feature>
<feature type="binding site" evidence="3">
    <location>
        <position position="58"/>
    </location>
    <ligand>
        <name>Ca(2+)</name>
        <dbReference type="ChEBI" id="CHEBI:29108"/>
        <label>2</label>
        <note>high affinity</note>
    </ligand>
</feature>
<feature type="binding site" evidence="3">
    <location>
        <position position="60"/>
    </location>
    <ligand>
        <name>Ca(2+)</name>
        <dbReference type="ChEBI" id="CHEBI:29108"/>
        <label>2</label>
        <note>high affinity</note>
    </ligand>
</feature>
<feature type="binding site" evidence="3">
    <location>
        <position position="62"/>
    </location>
    <ligand>
        <name>Ca(2+)</name>
        <dbReference type="ChEBI" id="CHEBI:29108"/>
        <label>2</label>
        <note>high affinity</note>
    </ligand>
</feature>
<feature type="binding site" evidence="3">
    <location>
        <position position="64"/>
    </location>
    <ligand>
        <name>Ca(2+)</name>
        <dbReference type="ChEBI" id="CHEBI:29108"/>
        <label>2</label>
        <note>high affinity</note>
    </ligand>
</feature>
<feature type="binding site" evidence="3">
    <location>
        <position position="69"/>
    </location>
    <ligand>
        <name>Ca(2+)</name>
        <dbReference type="ChEBI" id="CHEBI:29108"/>
        <label>2</label>
        <note>high affinity</note>
    </ligand>
</feature>
<feature type="modified residue" description="N-acetylserine" evidence="1">
    <location>
        <position position="2"/>
    </location>
</feature>
<feature type="modified residue" description="Phosphoserine" evidence="2">
    <location>
        <position position="47"/>
    </location>
</feature>
<reference key="1">
    <citation type="submission" date="2003-02" db="EMBL/GenBank/DDBJ databases">
        <title>Molecular cloning of the cDNA for Equus caballus calbindin-D9k.</title>
        <authorList>
            <person name="Toribio R.E."/>
            <person name="Rourke K.M."/>
            <person name="Levine A.L."/>
            <person name="Kohn C.W."/>
            <person name="Rosol T.J."/>
        </authorList>
    </citation>
    <scope>NUCLEOTIDE SEQUENCE [MRNA]</scope>
</reference>